<accession>Q8VS61</accession>
<protein>
    <recommendedName>
        <fullName evidence="1">Small ribosomal subunit protein uS3</fullName>
    </recommendedName>
    <alternativeName>
        <fullName evidence="2">30S ribosomal protein S3</fullName>
    </alternativeName>
</protein>
<sequence length="250" mass="28362">MGQKSNPNGLRLGIIRTWESKWYDVDKKVPFLVGEDFKIRPLIKNHYPKSTISQIEIKRLKKSNDEFIEIDLYTSKIGIIQGPENKNKNSLINKIEKLINKKVQINIFEVKAINKIAVLVAQNIAMQLQQRAFYKAVLKSAIQKALKSGVKGIKIIITGRLGGAEKARRDSISMGVVPLNTLRADIDYAFEEAHTTYGVLGVKVIINHGEVLPNKTIADTRQIFSSQYENKKNNNKRHFADKKNFKKSTS</sequence>
<reference key="1">
    <citation type="journal article" date="2002" name="Mol. Cell. Probes">
        <title>Genetic variability among flavescence doree phytoplasmas from different origins in Italy and France.</title>
        <authorList>
            <person name="Martini M."/>
            <person name="Botti S."/>
            <person name="Marcone C."/>
            <person name="Marzachi C."/>
            <person name="Casati P."/>
            <person name="Bianco P.A."/>
            <person name="Benedetti R."/>
            <person name="Bertaccini A."/>
        </authorList>
    </citation>
    <scope>NUCLEOTIDE SEQUENCE [GENOMIC DNA]</scope>
    <source>
        <strain>JWB</strain>
    </source>
</reference>
<evidence type="ECO:0000255" key="1">
    <source>
        <dbReference type="HAMAP-Rule" id="MF_01309"/>
    </source>
</evidence>
<evidence type="ECO:0000305" key="2"/>
<dbReference type="EMBL" id="AF396941">
    <property type="protein sequence ID" value="AAL57329.1"/>
    <property type="molecule type" value="Genomic_DNA"/>
</dbReference>
<dbReference type="SMR" id="Q8VS61"/>
<dbReference type="GO" id="GO:0022627">
    <property type="term" value="C:cytosolic small ribosomal subunit"/>
    <property type="evidence" value="ECO:0007669"/>
    <property type="project" value="TreeGrafter"/>
</dbReference>
<dbReference type="GO" id="GO:0003729">
    <property type="term" value="F:mRNA binding"/>
    <property type="evidence" value="ECO:0007669"/>
    <property type="project" value="UniProtKB-UniRule"/>
</dbReference>
<dbReference type="GO" id="GO:0019843">
    <property type="term" value="F:rRNA binding"/>
    <property type="evidence" value="ECO:0007669"/>
    <property type="project" value="UniProtKB-UniRule"/>
</dbReference>
<dbReference type="GO" id="GO:0003735">
    <property type="term" value="F:structural constituent of ribosome"/>
    <property type="evidence" value="ECO:0007669"/>
    <property type="project" value="InterPro"/>
</dbReference>
<dbReference type="GO" id="GO:0006412">
    <property type="term" value="P:translation"/>
    <property type="evidence" value="ECO:0007669"/>
    <property type="project" value="UniProtKB-UniRule"/>
</dbReference>
<dbReference type="CDD" id="cd02412">
    <property type="entry name" value="KH-II_30S_S3"/>
    <property type="match status" value="1"/>
</dbReference>
<dbReference type="Gene3D" id="3.30.300.20">
    <property type="match status" value="1"/>
</dbReference>
<dbReference type="Gene3D" id="3.30.1140.32">
    <property type="entry name" value="Ribosomal protein S3, C-terminal domain"/>
    <property type="match status" value="1"/>
</dbReference>
<dbReference type="HAMAP" id="MF_01309_B">
    <property type="entry name" value="Ribosomal_uS3_B"/>
    <property type="match status" value="1"/>
</dbReference>
<dbReference type="InterPro" id="IPR015946">
    <property type="entry name" value="KH_dom-like_a/b"/>
</dbReference>
<dbReference type="InterPro" id="IPR004044">
    <property type="entry name" value="KH_dom_type_2"/>
</dbReference>
<dbReference type="InterPro" id="IPR009019">
    <property type="entry name" value="KH_sf_prok-type"/>
</dbReference>
<dbReference type="InterPro" id="IPR036419">
    <property type="entry name" value="Ribosomal_S3_C_sf"/>
</dbReference>
<dbReference type="InterPro" id="IPR005704">
    <property type="entry name" value="Ribosomal_uS3_bac-typ"/>
</dbReference>
<dbReference type="InterPro" id="IPR001351">
    <property type="entry name" value="Ribosomal_uS3_C"/>
</dbReference>
<dbReference type="InterPro" id="IPR018280">
    <property type="entry name" value="Ribosomal_uS3_CS"/>
</dbReference>
<dbReference type="NCBIfam" id="TIGR01009">
    <property type="entry name" value="rpsC_bact"/>
    <property type="match status" value="1"/>
</dbReference>
<dbReference type="PANTHER" id="PTHR11760">
    <property type="entry name" value="30S/40S RIBOSOMAL PROTEIN S3"/>
    <property type="match status" value="1"/>
</dbReference>
<dbReference type="PANTHER" id="PTHR11760:SF19">
    <property type="entry name" value="SMALL RIBOSOMAL SUBUNIT PROTEIN US3C"/>
    <property type="match status" value="1"/>
</dbReference>
<dbReference type="Pfam" id="PF00189">
    <property type="entry name" value="Ribosomal_S3_C"/>
    <property type="match status" value="1"/>
</dbReference>
<dbReference type="SUPFAM" id="SSF54814">
    <property type="entry name" value="Prokaryotic type KH domain (KH-domain type II)"/>
    <property type="match status" value="1"/>
</dbReference>
<dbReference type="SUPFAM" id="SSF54821">
    <property type="entry name" value="Ribosomal protein S3 C-terminal domain"/>
    <property type="match status" value="1"/>
</dbReference>
<dbReference type="PROSITE" id="PS50823">
    <property type="entry name" value="KH_TYPE_2"/>
    <property type="match status" value="1"/>
</dbReference>
<dbReference type="PROSITE" id="PS00548">
    <property type="entry name" value="RIBOSOMAL_S3"/>
    <property type="match status" value="1"/>
</dbReference>
<organism>
    <name type="scientific">Ziziphus jujuba witches'-broom phytoplasma</name>
    <dbReference type="NCBI Taxonomy" id="135727"/>
    <lineage>
        <taxon>Bacteria</taxon>
        <taxon>Bacillati</taxon>
        <taxon>Mycoplasmatota</taxon>
        <taxon>Mollicutes</taxon>
        <taxon>Acholeplasmatales</taxon>
        <taxon>Acholeplasmataceae</taxon>
        <taxon>Candidatus Phytoplasma</taxon>
        <taxon>16SrV (Elm yellows group)</taxon>
    </lineage>
</organism>
<gene>
    <name evidence="1" type="primary">rpsC</name>
    <name evidence="1" type="synonym">rps3</name>
</gene>
<comment type="function">
    <text evidence="1">Binds the lower part of the 30S subunit head. Binds mRNA in the 70S ribosome, positioning it for translation.</text>
</comment>
<comment type="subunit">
    <text evidence="1">Part of the 30S ribosomal subunit. Forms a tight complex with proteins S10 and S14.</text>
</comment>
<comment type="similarity">
    <text evidence="1">Belongs to the universal ribosomal protein uS3 family.</text>
</comment>
<name>RS3_ZIZJU</name>
<keyword id="KW-0687">Ribonucleoprotein</keyword>
<keyword id="KW-0689">Ribosomal protein</keyword>
<keyword id="KW-0694">RNA-binding</keyword>
<keyword id="KW-0699">rRNA-binding</keyword>
<feature type="chain" id="PRO_0000130243" description="Small ribosomal subunit protein uS3">
    <location>
        <begin position="1"/>
        <end position="250"/>
    </location>
</feature>
<feature type="domain" description="KH type-2" evidence="1">
    <location>
        <begin position="39"/>
        <end position="111"/>
    </location>
</feature>
<proteinExistence type="inferred from homology"/>